<feature type="chain" id="PRO_1000121653" description="Large ribosomal subunit protein bL28">
    <location>
        <begin position="1"/>
        <end position="77"/>
    </location>
</feature>
<comment type="similarity">
    <text evidence="1">Belongs to the bacterial ribosomal protein bL28 family.</text>
</comment>
<evidence type="ECO:0000255" key="1">
    <source>
        <dbReference type="HAMAP-Rule" id="MF_00373"/>
    </source>
</evidence>
<evidence type="ECO:0000305" key="2"/>
<accession>B1Y149</accession>
<proteinExistence type="inferred from homology"/>
<dbReference type="EMBL" id="CP001013">
    <property type="protein sequence ID" value="ACB33026.1"/>
    <property type="molecule type" value="Genomic_DNA"/>
</dbReference>
<dbReference type="RefSeq" id="WP_012345788.1">
    <property type="nucleotide sequence ID" value="NC_010524.1"/>
</dbReference>
<dbReference type="SMR" id="B1Y149"/>
<dbReference type="STRING" id="395495.Lcho_0753"/>
<dbReference type="KEGG" id="lch:Lcho_0753"/>
<dbReference type="eggNOG" id="COG0227">
    <property type="taxonomic scope" value="Bacteria"/>
</dbReference>
<dbReference type="HOGENOM" id="CLU_064548_3_1_4"/>
<dbReference type="OrthoDB" id="9805609at2"/>
<dbReference type="Proteomes" id="UP000001693">
    <property type="component" value="Chromosome"/>
</dbReference>
<dbReference type="GO" id="GO:0022625">
    <property type="term" value="C:cytosolic large ribosomal subunit"/>
    <property type="evidence" value="ECO:0007669"/>
    <property type="project" value="TreeGrafter"/>
</dbReference>
<dbReference type="GO" id="GO:0003735">
    <property type="term" value="F:structural constituent of ribosome"/>
    <property type="evidence" value="ECO:0007669"/>
    <property type="project" value="InterPro"/>
</dbReference>
<dbReference type="GO" id="GO:0006412">
    <property type="term" value="P:translation"/>
    <property type="evidence" value="ECO:0007669"/>
    <property type="project" value="UniProtKB-UniRule"/>
</dbReference>
<dbReference type="FunFam" id="2.30.170.40:FF:000001">
    <property type="entry name" value="50S ribosomal protein L28"/>
    <property type="match status" value="1"/>
</dbReference>
<dbReference type="Gene3D" id="2.30.170.40">
    <property type="entry name" value="Ribosomal protein L28/L24"/>
    <property type="match status" value="1"/>
</dbReference>
<dbReference type="HAMAP" id="MF_00373">
    <property type="entry name" value="Ribosomal_bL28"/>
    <property type="match status" value="1"/>
</dbReference>
<dbReference type="InterPro" id="IPR026569">
    <property type="entry name" value="Ribosomal_bL28"/>
</dbReference>
<dbReference type="InterPro" id="IPR034704">
    <property type="entry name" value="Ribosomal_bL28/bL31-like_sf"/>
</dbReference>
<dbReference type="InterPro" id="IPR001383">
    <property type="entry name" value="Ribosomal_bL28_bact-type"/>
</dbReference>
<dbReference type="InterPro" id="IPR037147">
    <property type="entry name" value="Ribosomal_bL28_sf"/>
</dbReference>
<dbReference type="NCBIfam" id="TIGR00009">
    <property type="entry name" value="L28"/>
    <property type="match status" value="1"/>
</dbReference>
<dbReference type="PANTHER" id="PTHR13528">
    <property type="entry name" value="39S RIBOSOMAL PROTEIN L28, MITOCHONDRIAL"/>
    <property type="match status" value="1"/>
</dbReference>
<dbReference type="PANTHER" id="PTHR13528:SF2">
    <property type="entry name" value="LARGE RIBOSOMAL SUBUNIT PROTEIN BL28M"/>
    <property type="match status" value="1"/>
</dbReference>
<dbReference type="Pfam" id="PF00830">
    <property type="entry name" value="Ribosomal_L28"/>
    <property type="match status" value="1"/>
</dbReference>
<dbReference type="SUPFAM" id="SSF143800">
    <property type="entry name" value="L28p-like"/>
    <property type="match status" value="1"/>
</dbReference>
<keyword id="KW-1185">Reference proteome</keyword>
<keyword id="KW-0687">Ribonucleoprotein</keyword>
<keyword id="KW-0689">Ribosomal protein</keyword>
<protein>
    <recommendedName>
        <fullName evidence="1">Large ribosomal subunit protein bL28</fullName>
    </recommendedName>
    <alternativeName>
        <fullName evidence="2">50S ribosomal protein L28</fullName>
    </alternativeName>
</protein>
<name>RL28_LEPCP</name>
<sequence length="77" mass="8941">MARVCQVTGKGPMVGNNVSHANNKTKRRFLPNLHYRRFWLETENRWVRLRISNAALRLIDKVGIEQVVADLRARGEL</sequence>
<reference key="1">
    <citation type="submission" date="2008-03" db="EMBL/GenBank/DDBJ databases">
        <title>Complete sequence of Leptothrix cholodnii SP-6.</title>
        <authorList>
            <consortium name="US DOE Joint Genome Institute"/>
            <person name="Copeland A."/>
            <person name="Lucas S."/>
            <person name="Lapidus A."/>
            <person name="Glavina del Rio T."/>
            <person name="Dalin E."/>
            <person name="Tice H."/>
            <person name="Bruce D."/>
            <person name="Goodwin L."/>
            <person name="Pitluck S."/>
            <person name="Chertkov O."/>
            <person name="Brettin T."/>
            <person name="Detter J.C."/>
            <person name="Han C."/>
            <person name="Kuske C.R."/>
            <person name="Schmutz J."/>
            <person name="Larimer F."/>
            <person name="Land M."/>
            <person name="Hauser L."/>
            <person name="Kyrpides N."/>
            <person name="Lykidis A."/>
            <person name="Emerson D."/>
            <person name="Richardson P."/>
        </authorList>
    </citation>
    <scope>NUCLEOTIDE SEQUENCE [LARGE SCALE GENOMIC DNA]</scope>
    <source>
        <strain>ATCC 51168 / LMG 8142 / SP-6</strain>
    </source>
</reference>
<gene>
    <name evidence="1" type="primary">rpmB</name>
    <name type="ordered locus">Lcho_0753</name>
</gene>
<organism>
    <name type="scientific">Leptothrix cholodnii (strain ATCC 51168 / LMG 8142 / SP-6)</name>
    <name type="common">Leptothrix discophora (strain SP-6)</name>
    <dbReference type="NCBI Taxonomy" id="395495"/>
    <lineage>
        <taxon>Bacteria</taxon>
        <taxon>Pseudomonadati</taxon>
        <taxon>Pseudomonadota</taxon>
        <taxon>Betaproteobacteria</taxon>
        <taxon>Burkholderiales</taxon>
        <taxon>Sphaerotilaceae</taxon>
        <taxon>Leptothrix</taxon>
    </lineage>
</organism>